<reference key="1">
    <citation type="journal article" date="2002" name="Nucleic Acids Res.">
        <title>Genome sequence of Shigella flexneri 2a: insights into pathogenicity through comparison with genomes of Escherichia coli K12 and O157.</title>
        <authorList>
            <person name="Jin Q."/>
            <person name="Yuan Z."/>
            <person name="Xu J."/>
            <person name="Wang Y."/>
            <person name="Shen Y."/>
            <person name="Lu W."/>
            <person name="Wang J."/>
            <person name="Liu H."/>
            <person name="Yang J."/>
            <person name="Yang F."/>
            <person name="Zhang X."/>
            <person name="Zhang J."/>
            <person name="Yang G."/>
            <person name="Wu H."/>
            <person name="Qu D."/>
            <person name="Dong J."/>
            <person name="Sun L."/>
            <person name="Xue Y."/>
            <person name="Zhao A."/>
            <person name="Gao Y."/>
            <person name="Zhu J."/>
            <person name="Kan B."/>
            <person name="Ding K."/>
            <person name="Chen S."/>
            <person name="Cheng H."/>
            <person name="Yao Z."/>
            <person name="He B."/>
            <person name="Chen R."/>
            <person name="Ma D."/>
            <person name="Qiang B."/>
            <person name="Wen Y."/>
            <person name="Hou Y."/>
            <person name="Yu J."/>
        </authorList>
    </citation>
    <scope>NUCLEOTIDE SEQUENCE [LARGE SCALE GENOMIC DNA]</scope>
    <source>
        <strain>301 / Serotype 2a</strain>
    </source>
</reference>
<reference key="2">
    <citation type="journal article" date="2003" name="Infect. Immun.">
        <title>Complete genome sequence and comparative genomics of Shigella flexneri serotype 2a strain 2457T.</title>
        <authorList>
            <person name="Wei J."/>
            <person name="Goldberg M.B."/>
            <person name="Burland V."/>
            <person name="Venkatesan M.M."/>
            <person name="Deng W."/>
            <person name="Fournier G."/>
            <person name="Mayhew G.F."/>
            <person name="Plunkett G. III"/>
            <person name="Rose D.J."/>
            <person name="Darling A."/>
            <person name="Mau B."/>
            <person name="Perna N.T."/>
            <person name="Payne S.M."/>
            <person name="Runyen-Janecky L.J."/>
            <person name="Zhou S."/>
            <person name="Schwartz D.C."/>
            <person name="Blattner F.R."/>
        </authorList>
    </citation>
    <scope>NUCLEOTIDE SEQUENCE [LARGE SCALE GENOMIC DNA]</scope>
    <source>
        <strain>ATCC 700930 / 2457T / Serotype 2a</strain>
    </source>
</reference>
<feature type="chain" id="PRO_0000168742" description="Inner membrane protein YbjM">
    <location>
        <begin position="1"/>
        <end position="125"/>
    </location>
</feature>
<feature type="topological domain" description="Cytoplasmic" evidence="2">
    <location>
        <begin position="1"/>
        <end position="6"/>
    </location>
</feature>
<feature type="transmembrane region" description="Helical" evidence="2">
    <location>
        <begin position="7"/>
        <end position="27"/>
    </location>
</feature>
<feature type="topological domain" description="Periplasmic" evidence="2">
    <location>
        <begin position="28"/>
        <end position="34"/>
    </location>
</feature>
<feature type="transmembrane region" description="Helical" evidence="2">
    <location>
        <begin position="35"/>
        <end position="55"/>
    </location>
</feature>
<feature type="topological domain" description="Cytoplasmic" evidence="2">
    <location>
        <begin position="56"/>
        <end position="64"/>
    </location>
</feature>
<feature type="transmembrane region" description="Helical" evidence="2">
    <location>
        <begin position="65"/>
        <end position="85"/>
    </location>
</feature>
<feature type="topological domain" description="Periplasmic" evidence="2">
    <location>
        <begin position="86"/>
        <end position="92"/>
    </location>
</feature>
<feature type="transmembrane region" description="Helical" evidence="2">
    <location>
        <begin position="93"/>
        <end position="113"/>
    </location>
</feature>
<feature type="topological domain" description="Cytoplasmic" evidence="2">
    <location>
        <begin position="114"/>
        <end position="125"/>
    </location>
</feature>
<proteinExistence type="inferred from homology"/>
<comment type="subcellular location">
    <subcellularLocation>
        <location evidence="1">Cell inner membrane</location>
        <topology evidence="1">Multi-pass membrane protein</topology>
    </subcellularLocation>
</comment>
<gene>
    <name type="primary">ybjM</name>
    <name type="ordered locus">SF0801</name>
    <name type="ordered locus">S0844</name>
</gene>
<name>YBJM_SHIFL</name>
<organism>
    <name type="scientific">Shigella flexneri</name>
    <dbReference type="NCBI Taxonomy" id="623"/>
    <lineage>
        <taxon>Bacteria</taxon>
        <taxon>Pseudomonadati</taxon>
        <taxon>Pseudomonadota</taxon>
        <taxon>Gammaproteobacteria</taxon>
        <taxon>Enterobacterales</taxon>
        <taxon>Enterobacteriaceae</taxon>
        <taxon>Shigella</taxon>
    </lineage>
</organism>
<dbReference type="EMBL" id="AE005674">
    <property type="protein sequence ID" value="AAN42434.1"/>
    <property type="molecule type" value="Genomic_DNA"/>
</dbReference>
<dbReference type="EMBL" id="AE014073">
    <property type="protein sequence ID" value="AAP16307.1"/>
    <property type="molecule type" value="Genomic_DNA"/>
</dbReference>
<dbReference type="RefSeq" id="NP_706727.1">
    <property type="nucleotide sequence ID" value="NC_004337.2"/>
</dbReference>
<dbReference type="RefSeq" id="WP_000681108.1">
    <property type="nucleotide sequence ID" value="NZ_WPGW01000056.1"/>
</dbReference>
<dbReference type="PaxDb" id="198214-SF0801"/>
<dbReference type="GeneID" id="1023768"/>
<dbReference type="KEGG" id="sfl:SF0801"/>
<dbReference type="KEGG" id="sfx:S0844"/>
<dbReference type="PATRIC" id="fig|198214.7.peg.929"/>
<dbReference type="HOGENOM" id="CLU_140365_0_0_6"/>
<dbReference type="Proteomes" id="UP000001006">
    <property type="component" value="Chromosome"/>
</dbReference>
<dbReference type="Proteomes" id="UP000002673">
    <property type="component" value="Chromosome"/>
</dbReference>
<dbReference type="GO" id="GO:0005886">
    <property type="term" value="C:plasma membrane"/>
    <property type="evidence" value="ECO:0007669"/>
    <property type="project" value="UniProtKB-SubCell"/>
</dbReference>
<dbReference type="InterPro" id="IPR020368">
    <property type="entry name" value="Uncharacterised_YbjM"/>
</dbReference>
<dbReference type="Pfam" id="PF11045">
    <property type="entry name" value="YbjM"/>
    <property type="match status" value="1"/>
</dbReference>
<sequence>MKHKQRWAGAICCFVLFIVVCLFLATHMKGAFRAAGHPEIGLLFFILPGAVASFFSQRREVLKPLFGAMLAAPCSMLIMRLFFSPTRSFWQELAWLLSAVFWCALGALCFLFISSLFKPQHRKNQ</sequence>
<accession>P64441</accession>
<accession>P75813</accession>
<keyword id="KW-0997">Cell inner membrane</keyword>
<keyword id="KW-1003">Cell membrane</keyword>
<keyword id="KW-0472">Membrane</keyword>
<keyword id="KW-1185">Reference proteome</keyword>
<keyword id="KW-0812">Transmembrane</keyword>
<keyword id="KW-1133">Transmembrane helix</keyword>
<protein>
    <recommendedName>
        <fullName>Inner membrane protein YbjM</fullName>
    </recommendedName>
</protein>
<evidence type="ECO:0000250" key="1"/>
<evidence type="ECO:0000255" key="2"/>